<accession>P0DP76</accession>
<evidence type="ECO:0000250" key="1">
    <source>
        <dbReference type="UniProtKB" id="P0DMC2"/>
    </source>
</evidence>
<evidence type="ECO:0000250" key="2">
    <source>
        <dbReference type="UniProtKB" id="P0DMC3"/>
    </source>
</evidence>
<evidence type="ECO:0000250" key="3">
    <source>
        <dbReference type="UniProtKB" id="P0DMC4"/>
    </source>
</evidence>
<evidence type="ECO:0000269" key="4">
    <source>
    </source>
</evidence>
<evidence type="ECO:0000269" key="5">
    <source>
    </source>
</evidence>
<evidence type="ECO:0000305" key="6"/>
<proteinExistence type="inferred from homology"/>
<gene>
    <name evidence="2" type="primary">Apela</name>
    <name type="synonym">Ela</name>
    <name type="synonym">Tdl</name>
</gene>
<feature type="signal peptide" evidence="2">
    <location>
        <begin position="1"/>
        <end position="25"/>
    </location>
</feature>
<feature type="chain" id="PRO_0000441047" description="Apelin receptor early endogenous ligand">
    <location>
        <begin position="26"/>
        <end position="54"/>
    </location>
</feature>
<protein>
    <recommendedName>
        <fullName evidence="2">Apelin receptor early endogenous ligand</fullName>
    </recommendedName>
    <alternativeName>
        <fullName evidence="1">Protein Elabela</fullName>
        <shortName evidence="1">ELA</shortName>
    </alternativeName>
    <alternativeName>
        <fullName evidence="1">Protein Toddler</fullName>
    </alternativeName>
</protein>
<keyword id="KW-0037">Angiogenesis</keyword>
<keyword id="KW-0217">Developmental protein</keyword>
<keyword id="KW-0221">Differentiation</keyword>
<keyword id="KW-0306">Gastrulation</keyword>
<keyword id="KW-0372">Hormone</keyword>
<keyword id="KW-1185">Reference proteome</keyword>
<keyword id="KW-0964">Secreted</keyword>
<keyword id="KW-0732">Signal</keyword>
<reference key="1">
    <citation type="journal article" date="2004" name="Nature">
        <title>Genome sequence of the Brown Norway rat yields insights into mammalian evolution.</title>
        <authorList>
            <person name="Gibbs R.A."/>
            <person name="Weinstock G.M."/>
            <person name="Metzker M.L."/>
            <person name="Muzny D.M."/>
            <person name="Sodergren E.J."/>
            <person name="Scherer S."/>
            <person name="Scott G."/>
            <person name="Steffen D."/>
            <person name="Worley K.C."/>
            <person name="Burch P.E."/>
            <person name="Okwuonu G."/>
            <person name="Hines S."/>
            <person name="Lewis L."/>
            <person name="Deramo C."/>
            <person name="Delgado O."/>
            <person name="Dugan-Rocha S."/>
            <person name="Miner G."/>
            <person name="Morgan M."/>
            <person name="Hawes A."/>
            <person name="Gill R."/>
            <person name="Holt R.A."/>
            <person name="Adams M.D."/>
            <person name="Amanatides P.G."/>
            <person name="Baden-Tillson H."/>
            <person name="Barnstead M."/>
            <person name="Chin S."/>
            <person name="Evans C.A."/>
            <person name="Ferriera S."/>
            <person name="Fosler C."/>
            <person name="Glodek A."/>
            <person name="Gu Z."/>
            <person name="Jennings D."/>
            <person name="Kraft C.L."/>
            <person name="Nguyen T."/>
            <person name="Pfannkoch C.M."/>
            <person name="Sitter C."/>
            <person name="Sutton G.G."/>
            <person name="Venter J.C."/>
            <person name="Woodage T."/>
            <person name="Smith D."/>
            <person name="Lee H.-M."/>
            <person name="Gustafson E."/>
            <person name="Cahill P."/>
            <person name="Kana A."/>
            <person name="Doucette-Stamm L."/>
            <person name="Weinstock K."/>
            <person name="Fechtel K."/>
            <person name="Weiss R.B."/>
            <person name="Dunn D.M."/>
            <person name="Green E.D."/>
            <person name="Blakesley R.W."/>
            <person name="Bouffard G.G."/>
            <person name="De Jong P.J."/>
            <person name="Osoegawa K."/>
            <person name="Zhu B."/>
            <person name="Marra M."/>
            <person name="Schein J."/>
            <person name="Bosdet I."/>
            <person name="Fjell C."/>
            <person name="Jones S."/>
            <person name="Krzywinski M."/>
            <person name="Mathewson C."/>
            <person name="Siddiqui A."/>
            <person name="Wye N."/>
            <person name="McPherson J."/>
            <person name="Zhao S."/>
            <person name="Fraser C.M."/>
            <person name="Shetty J."/>
            <person name="Shatsman S."/>
            <person name="Geer K."/>
            <person name="Chen Y."/>
            <person name="Abramzon S."/>
            <person name="Nierman W.C."/>
            <person name="Havlak P.H."/>
            <person name="Chen R."/>
            <person name="Durbin K.J."/>
            <person name="Egan A."/>
            <person name="Ren Y."/>
            <person name="Song X.-Z."/>
            <person name="Li B."/>
            <person name="Liu Y."/>
            <person name="Qin X."/>
            <person name="Cawley S."/>
            <person name="Cooney A.J."/>
            <person name="D'Souza L.M."/>
            <person name="Martin K."/>
            <person name="Wu J.Q."/>
            <person name="Gonzalez-Garay M.L."/>
            <person name="Jackson A.R."/>
            <person name="Kalafus K.J."/>
            <person name="McLeod M.P."/>
            <person name="Milosavljevic A."/>
            <person name="Virk D."/>
            <person name="Volkov A."/>
            <person name="Wheeler D.A."/>
            <person name="Zhang Z."/>
            <person name="Bailey J.A."/>
            <person name="Eichler E.E."/>
            <person name="Tuzun E."/>
            <person name="Birney E."/>
            <person name="Mongin E."/>
            <person name="Ureta-Vidal A."/>
            <person name="Woodwark C."/>
            <person name="Zdobnov E."/>
            <person name="Bork P."/>
            <person name="Suyama M."/>
            <person name="Torrents D."/>
            <person name="Alexandersson M."/>
            <person name="Trask B.J."/>
            <person name="Young J.M."/>
            <person name="Huang H."/>
            <person name="Wang H."/>
            <person name="Xing H."/>
            <person name="Daniels S."/>
            <person name="Gietzen D."/>
            <person name="Schmidt J."/>
            <person name="Stevens K."/>
            <person name="Vitt U."/>
            <person name="Wingrove J."/>
            <person name="Camara F."/>
            <person name="Mar Alba M."/>
            <person name="Abril J.F."/>
            <person name="Guigo R."/>
            <person name="Smit A."/>
            <person name="Dubchak I."/>
            <person name="Rubin E.M."/>
            <person name="Couronne O."/>
            <person name="Poliakov A."/>
            <person name="Huebner N."/>
            <person name="Ganten D."/>
            <person name="Goesele C."/>
            <person name="Hummel O."/>
            <person name="Kreitler T."/>
            <person name="Lee Y.-A."/>
            <person name="Monti J."/>
            <person name="Schulz H."/>
            <person name="Zimdahl H."/>
            <person name="Himmelbauer H."/>
            <person name="Lehrach H."/>
            <person name="Jacob H.J."/>
            <person name="Bromberg S."/>
            <person name="Gullings-Handley J."/>
            <person name="Jensen-Seaman M.I."/>
            <person name="Kwitek A.E."/>
            <person name="Lazar J."/>
            <person name="Pasko D."/>
            <person name="Tonellato P.J."/>
            <person name="Twigger S."/>
            <person name="Ponting C.P."/>
            <person name="Duarte J.M."/>
            <person name="Rice S."/>
            <person name="Goodstadt L."/>
            <person name="Beatson S.A."/>
            <person name="Emes R.D."/>
            <person name="Winter E.E."/>
            <person name="Webber C."/>
            <person name="Brandt P."/>
            <person name="Nyakatura G."/>
            <person name="Adetobi M."/>
            <person name="Chiaromonte F."/>
            <person name="Elnitski L."/>
            <person name="Eswara P."/>
            <person name="Hardison R.C."/>
            <person name="Hou M."/>
            <person name="Kolbe D."/>
            <person name="Makova K."/>
            <person name="Miller W."/>
            <person name="Nekrutenko A."/>
            <person name="Riemer C."/>
            <person name="Schwartz S."/>
            <person name="Taylor J."/>
            <person name="Yang S."/>
            <person name="Zhang Y."/>
            <person name="Lindpaintner K."/>
            <person name="Andrews T.D."/>
            <person name="Caccamo M."/>
            <person name="Clamp M."/>
            <person name="Clarke L."/>
            <person name="Curwen V."/>
            <person name="Durbin R.M."/>
            <person name="Eyras E."/>
            <person name="Searle S.M."/>
            <person name="Cooper G.M."/>
            <person name="Batzoglou S."/>
            <person name="Brudno M."/>
            <person name="Sidow A."/>
            <person name="Stone E.A."/>
            <person name="Payseur B.A."/>
            <person name="Bourque G."/>
            <person name="Lopez-Otin C."/>
            <person name="Puente X.S."/>
            <person name="Chakrabarti K."/>
            <person name="Chatterji S."/>
            <person name="Dewey C."/>
            <person name="Pachter L."/>
            <person name="Bray N."/>
            <person name="Yap V.B."/>
            <person name="Caspi A."/>
            <person name="Tesler G."/>
            <person name="Pevzner P.A."/>
            <person name="Haussler D."/>
            <person name="Roskin K.M."/>
            <person name="Baertsch R."/>
            <person name="Clawson H."/>
            <person name="Furey T.S."/>
            <person name="Hinrichs A.S."/>
            <person name="Karolchik D."/>
            <person name="Kent W.J."/>
            <person name="Rosenbloom K.R."/>
            <person name="Trumbower H."/>
            <person name="Weirauch M."/>
            <person name="Cooper D.N."/>
            <person name="Stenson P.D."/>
            <person name="Ma B."/>
            <person name="Brent M."/>
            <person name="Arumugam M."/>
            <person name="Shteynberg D."/>
            <person name="Copley R.R."/>
            <person name="Taylor M.S."/>
            <person name="Riethman H."/>
            <person name="Mudunuri U."/>
            <person name="Peterson J."/>
            <person name="Guyer M."/>
            <person name="Felsenfeld A."/>
            <person name="Old S."/>
            <person name="Mockrin S."/>
            <person name="Collins F.S."/>
        </authorList>
    </citation>
    <scope>NUCLEOTIDE SEQUENCE [LARGE SCALE GENOMIC DNA]</scope>
    <source>
        <strain>Brown Norway</strain>
    </source>
</reference>
<reference key="2">
    <citation type="submission" date="2010-06" db="EMBL/GenBank/DDBJ databases">
        <authorList>
            <consortium name="Genoscope - CEA"/>
        </authorList>
    </citation>
    <scope>NUCLEOTIDE SEQUENCE [LARGE SCALE MRNA]</scope>
    <source>
        <tissue>Brain</tissue>
    </source>
</reference>
<reference key="3">
    <citation type="journal article" date="2016" name="Basic Res. Cardiol.">
        <title>Characterization of apela, a novel endogenous ligand of apelin receptor, in the adult heart.</title>
        <authorList>
            <person name="Perjes A."/>
            <person name="Kilpioe T."/>
            <person name="Ulvila J."/>
            <person name="Magga J."/>
            <person name="Alakoski T."/>
            <person name="Szabo Z."/>
            <person name="Vainio L."/>
            <person name="Halmetoja E."/>
            <person name="Vuolteenaho O."/>
            <person name="Petaejae-Repo U."/>
            <person name="Szokodi I."/>
            <person name="Kerkelae R."/>
        </authorList>
    </citation>
    <scope>FUNCTION</scope>
</reference>
<reference key="4">
    <citation type="journal article" date="2017" name="Circulation">
        <title>Elabela/Toddler is an endogenous agonist of the apelin APJ receptor in the adult cardiovascular system, and exogenous administration of the peptide compensates for the downregulation of its expression in pulmonary arterial hypertension.</title>
        <authorList>
            <person name="Yang P."/>
            <person name="Read C."/>
            <person name="Kuc R.E."/>
            <person name="Buonincontri G."/>
            <person name="Southwood M."/>
            <person name="Torella R."/>
            <person name="Upton P.D."/>
            <person name="Crosby A."/>
            <person name="Sawiak S.J."/>
            <person name="Carpenter T.A."/>
            <person name="Glen R.C."/>
            <person name="Morrell N.W."/>
            <person name="Maguire J.J."/>
            <person name="Davenport A.P."/>
        </authorList>
    </citation>
    <scope>FUNCTION</scope>
</reference>
<comment type="function">
    <text evidence="1 2 3 4 5">Peptide hormone that functions as endogenous ligand for the G-protein-coupled apelin receptor (APLNR/APJ), that plays a role in the regulation of normal cardiovascular function and fluid homeostasis (PubMed:28137936). Functions as a balanced agonist activating both G(i) protein pathway and beta-arrestin pathway of APLNR (By similarity). Downstream G proteins activation, apelin can inhibit cAMP production and activate key intracellular effectors such as ERKs (By similarity). On the other hand, APLNR activation induces beta-arrestin recruitment to the membrane leading to desensitization and internalization of the receptor (By similarity). Required for mesendodermal differentiation, blood vessels formation and heart morphogenesis during early development and for adult cardiovascular homeostasis (PubMed:26611206, PubMed:28137936). Acts as a motogen by promoting mesendodermal cell migration during gastrulation by binding and activating APLNR. Acts as an early embryonic regulator of cellular movement with a role in migration and development of cardiac progenitor cells. May act as a chemoattractant for the activation of angioblast migration toward the embryonic midline, i.e. the position of the future vessel formation, during vasculogenesis. Positively regulates sinus venosus (SV)-derived endothelial cells migration into the developing heart to promote coronary blood vessel sprouting. Plays a role in placental vascular development; promotes placental trophoblast invasion and spiral artery remodeling in the uterus (By similarity). Involved in the regulation of maternal cardiovascular homeostasis to prevent gestational hypertension and for potent cardioprotective functions during heart failure (PubMed:26611206). Mediates myocardial contractility in an ERK1/2-dependent manner (PubMed:26611206).</text>
</comment>
<comment type="subunit">
    <text evidence="2">Interacts with APLNR.</text>
</comment>
<comment type="subcellular location">
    <subcellularLocation>
        <location evidence="3">Secreted</location>
    </subcellularLocation>
    <subcellularLocation>
        <location evidence="3">Secreted</location>
        <location evidence="3">Extracellular space</location>
    </subcellularLocation>
    <text evidence="2 3">Found in blood plasma. Found in serum of pregnant mice, peaking at midgestation; indicating a maternal and zygotic origin of circulating APELA during pregnancy.</text>
</comment>
<comment type="similarity">
    <text evidence="6">Belongs to the Elabela/Toddler family.</text>
</comment>
<sequence length="54" mass="6823">MRFQPLFWVFFIFAMSLLFITEEKSVNFPRRRKLYRHNCFRRRCISLHSRVPFP</sequence>
<dbReference type="EMBL" id="AABR07025051">
    <property type="status" value="NOT_ANNOTATED_CDS"/>
    <property type="molecule type" value="Genomic_DNA"/>
</dbReference>
<dbReference type="EMBL" id="FQ214304">
    <property type="status" value="NOT_ANNOTATED_CDS"/>
    <property type="molecule type" value="mRNA"/>
</dbReference>
<dbReference type="RefSeq" id="NP_001386353.1">
    <property type="nucleotide sequence ID" value="NM_001399424.1"/>
</dbReference>
<dbReference type="RefSeq" id="XP_008770257.1">
    <property type="nucleotide sequence ID" value="XM_008772035.2"/>
</dbReference>
<dbReference type="SMR" id="P0DP76"/>
<dbReference type="Ensembl" id="ENSRNOT00000107155.1">
    <property type="protein sequence ID" value="ENSRNOP00000082744.1"/>
    <property type="gene ID" value="ENSRNOG00000067022.1"/>
</dbReference>
<dbReference type="GeneID" id="103693925"/>
<dbReference type="AGR" id="RGD:9299863"/>
<dbReference type="RGD" id="9299863">
    <property type="gene designation" value="Apela"/>
</dbReference>
<dbReference type="GeneTree" id="ENSGT01120000272498"/>
<dbReference type="InParanoid" id="P0DP76"/>
<dbReference type="OMA" id="GCSHRRC"/>
<dbReference type="OrthoDB" id="9922869at2759"/>
<dbReference type="PRO" id="PR:P0DP76"/>
<dbReference type="Proteomes" id="UP000002494">
    <property type="component" value="Chromosome 16"/>
</dbReference>
<dbReference type="GO" id="GO:0005576">
    <property type="term" value="C:extracellular region"/>
    <property type="evidence" value="ECO:0000266"/>
    <property type="project" value="RGD"/>
</dbReference>
<dbReference type="GO" id="GO:0005615">
    <property type="term" value="C:extracellular space"/>
    <property type="evidence" value="ECO:0000250"/>
    <property type="project" value="UniProtKB"/>
</dbReference>
<dbReference type="GO" id="GO:0031704">
    <property type="term" value="F:apelin receptor binding"/>
    <property type="evidence" value="ECO:0000314"/>
    <property type="project" value="UniProtKB"/>
</dbReference>
<dbReference type="GO" id="GO:0005179">
    <property type="term" value="F:hormone activity"/>
    <property type="evidence" value="ECO:0000250"/>
    <property type="project" value="UniProtKB"/>
</dbReference>
<dbReference type="GO" id="GO:0007512">
    <property type="term" value="P:adult heart development"/>
    <property type="evidence" value="ECO:0000250"/>
    <property type="project" value="UniProtKB"/>
</dbReference>
<dbReference type="GO" id="GO:0001525">
    <property type="term" value="P:angiogenesis"/>
    <property type="evidence" value="ECO:0007669"/>
    <property type="project" value="UniProtKB-KW"/>
</dbReference>
<dbReference type="GO" id="GO:0060183">
    <property type="term" value="P:apelin receptor signaling pathway"/>
    <property type="evidence" value="ECO:0000315"/>
    <property type="project" value="UniProtKB"/>
</dbReference>
<dbReference type="GO" id="GO:0060976">
    <property type="term" value="P:coronary vasculature development"/>
    <property type="evidence" value="ECO:0000250"/>
    <property type="project" value="UniProtKB"/>
</dbReference>
<dbReference type="GO" id="GO:0035050">
    <property type="term" value="P:embryonic heart tube development"/>
    <property type="evidence" value="ECO:0000250"/>
    <property type="project" value="UniProtKB"/>
</dbReference>
<dbReference type="GO" id="GO:0007186">
    <property type="term" value="P:G protein-coupled receptor signaling pathway"/>
    <property type="evidence" value="ECO:0000250"/>
    <property type="project" value="UniProtKB"/>
</dbReference>
<dbReference type="GO" id="GO:0007509">
    <property type="term" value="P:mesoderm migration involved in gastrulation"/>
    <property type="evidence" value="ECO:0000250"/>
    <property type="project" value="UniProtKB"/>
</dbReference>
<dbReference type="GO" id="GO:0060674">
    <property type="term" value="P:placenta blood vessel development"/>
    <property type="evidence" value="ECO:0000250"/>
    <property type="project" value="UniProtKB"/>
</dbReference>
<dbReference type="GO" id="GO:0045766">
    <property type="term" value="P:positive regulation of angiogenesis"/>
    <property type="evidence" value="ECO:0000266"/>
    <property type="project" value="RGD"/>
</dbReference>
<dbReference type="GO" id="GO:1903589">
    <property type="term" value="P:positive regulation of blood vessel endothelial cell proliferation involved in sprouting angiogenesis"/>
    <property type="evidence" value="ECO:0000250"/>
    <property type="project" value="UniProtKB"/>
</dbReference>
<dbReference type="GO" id="GO:0070374">
    <property type="term" value="P:positive regulation of ERK1 and ERK2 cascade"/>
    <property type="evidence" value="ECO:0000315"/>
    <property type="project" value="UniProtKB"/>
</dbReference>
<dbReference type="GO" id="GO:1904022">
    <property type="term" value="P:positive regulation of G protein-coupled receptor internalization"/>
    <property type="evidence" value="ECO:0000266"/>
    <property type="project" value="RGD"/>
</dbReference>
<dbReference type="GO" id="GO:0045823">
    <property type="term" value="P:positive regulation of heart contraction"/>
    <property type="evidence" value="ECO:0000315"/>
    <property type="project" value="UniProtKB"/>
</dbReference>
<dbReference type="GO" id="GO:1901165">
    <property type="term" value="P:positive regulation of trophoblast cell migration"/>
    <property type="evidence" value="ECO:0000250"/>
    <property type="project" value="UniProtKB"/>
</dbReference>
<dbReference type="GO" id="GO:0008217">
    <property type="term" value="P:regulation of blood pressure"/>
    <property type="evidence" value="ECO:0000266"/>
    <property type="project" value="RGD"/>
</dbReference>
<dbReference type="GO" id="GO:0001570">
    <property type="term" value="P:vasculogenesis"/>
    <property type="evidence" value="ECO:0000250"/>
    <property type="project" value="UniProtKB"/>
</dbReference>
<dbReference type="CDD" id="cd20244">
    <property type="entry name" value="Toddler"/>
    <property type="match status" value="1"/>
</dbReference>
<dbReference type="InterPro" id="IPR047853">
    <property type="entry name" value="ELA"/>
</dbReference>
<dbReference type="Pfam" id="PF22050">
    <property type="entry name" value="Toddler"/>
    <property type="match status" value="1"/>
</dbReference>
<organism>
    <name type="scientific">Rattus norvegicus</name>
    <name type="common">Rat</name>
    <dbReference type="NCBI Taxonomy" id="10116"/>
    <lineage>
        <taxon>Eukaryota</taxon>
        <taxon>Metazoa</taxon>
        <taxon>Chordata</taxon>
        <taxon>Craniata</taxon>
        <taxon>Vertebrata</taxon>
        <taxon>Euteleostomi</taxon>
        <taxon>Mammalia</taxon>
        <taxon>Eutheria</taxon>
        <taxon>Euarchontoglires</taxon>
        <taxon>Glires</taxon>
        <taxon>Rodentia</taxon>
        <taxon>Myomorpha</taxon>
        <taxon>Muroidea</taxon>
        <taxon>Muridae</taxon>
        <taxon>Murinae</taxon>
        <taxon>Rattus</taxon>
    </lineage>
</organism>
<name>ELA_RAT</name>